<evidence type="ECO:0000305" key="1"/>
<protein>
    <recommendedName>
        <fullName>Uncharacterized oxidoreductase YrbE</fullName>
        <ecNumber>1.-.-.-</ecNumber>
    </recommendedName>
</protein>
<dbReference type="EC" id="1.-.-.-"/>
<dbReference type="EMBL" id="Y15896">
    <property type="protein sequence ID" value="CAB75327.1"/>
    <property type="molecule type" value="Genomic_DNA"/>
</dbReference>
<dbReference type="EMBL" id="AL009126">
    <property type="protein sequence ID" value="CAB14737.1"/>
    <property type="molecule type" value="Genomic_DNA"/>
</dbReference>
<dbReference type="EMBL" id="X93081">
    <property type="protein sequence ID" value="CAA63619.1"/>
    <property type="molecule type" value="Genomic_DNA"/>
</dbReference>
<dbReference type="PIR" id="D69972">
    <property type="entry name" value="D69972"/>
</dbReference>
<dbReference type="RefSeq" id="NP_390655.1">
    <property type="nucleotide sequence ID" value="NC_000964.3"/>
</dbReference>
<dbReference type="SMR" id="O05389"/>
<dbReference type="FunCoup" id="O05389">
    <property type="interactions" value="480"/>
</dbReference>
<dbReference type="STRING" id="224308.BSU27770"/>
<dbReference type="jPOST" id="O05389"/>
<dbReference type="PaxDb" id="224308-BSU27770"/>
<dbReference type="EnsemblBacteria" id="CAB14737">
    <property type="protein sequence ID" value="CAB14737"/>
    <property type="gene ID" value="BSU_27770"/>
</dbReference>
<dbReference type="GeneID" id="936523"/>
<dbReference type="KEGG" id="bsu:BSU27770"/>
<dbReference type="PATRIC" id="fig|224308.179.peg.3017"/>
<dbReference type="eggNOG" id="COG0673">
    <property type="taxonomic scope" value="Bacteria"/>
</dbReference>
<dbReference type="InParanoid" id="O05389"/>
<dbReference type="OrthoDB" id="9815825at2"/>
<dbReference type="PhylomeDB" id="O05389"/>
<dbReference type="BioCyc" id="BSUB:BSU27770-MONOMER"/>
<dbReference type="Proteomes" id="UP000001570">
    <property type="component" value="Chromosome"/>
</dbReference>
<dbReference type="GO" id="GO:0000166">
    <property type="term" value="F:nucleotide binding"/>
    <property type="evidence" value="ECO:0007669"/>
    <property type="project" value="InterPro"/>
</dbReference>
<dbReference type="GO" id="GO:0016491">
    <property type="term" value="F:oxidoreductase activity"/>
    <property type="evidence" value="ECO:0007669"/>
    <property type="project" value="UniProtKB-KW"/>
</dbReference>
<dbReference type="FunFam" id="3.30.360.10:FF:000023">
    <property type="entry name" value="Inositol 2-dehydrogenase"/>
    <property type="match status" value="1"/>
</dbReference>
<dbReference type="Gene3D" id="3.30.360.10">
    <property type="entry name" value="Dihydrodipicolinate Reductase, domain 2"/>
    <property type="match status" value="1"/>
</dbReference>
<dbReference type="Gene3D" id="3.40.50.720">
    <property type="entry name" value="NAD(P)-binding Rossmann-like Domain"/>
    <property type="match status" value="1"/>
</dbReference>
<dbReference type="InterPro" id="IPR000683">
    <property type="entry name" value="Gfo/Idh/MocA-like_OxRdtase_N"/>
</dbReference>
<dbReference type="InterPro" id="IPR055170">
    <property type="entry name" value="GFO_IDH_MocA-like_dom"/>
</dbReference>
<dbReference type="InterPro" id="IPR030827">
    <property type="entry name" value="Myo_inos_IolG"/>
</dbReference>
<dbReference type="InterPro" id="IPR036291">
    <property type="entry name" value="NAD(P)-bd_dom_sf"/>
</dbReference>
<dbReference type="NCBIfam" id="TIGR04380">
    <property type="entry name" value="myo_inos_iolG"/>
    <property type="match status" value="1"/>
</dbReference>
<dbReference type="PANTHER" id="PTHR42840:SF3">
    <property type="entry name" value="BINDING ROSSMANN FOLD OXIDOREDUCTASE, PUTATIVE (AFU_ORTHOLOGUE AFUA_2G10240)-RELATED"/>
    <property type="match status" value="1"/>
</dbReference>
<dbReference type="PANTHER" id="PTHR42840">
    <property type="entry name" value="NAD(P)-BINDING ROSSMANN-FOLD SUPERFAMILY PROTEIN-RELATED"/>
    <property type="match status" value="1"/>
</dbReference>
<dbReference type="Pfam" id="PF01408">
    <property type="entry name" value="GFO_IDH_MocA"/>
    <property type="match status" value="1"/>
</dbReference>
<dbReference type="Pfam" id="PF22725">
    <property type="entry name" value="GFO_IDH_MocA_C3"/>
    <property type="match status" value="1"/>
</dbReference>
<dbReference type="SUPFAM" id="SSF55347">
    <property type="entry name" value="Glyceraldehyde-3-phosphate dehydrogenase-like, C-terminal domain"/>
    <property type="match status" value="1"/>
</dbReference>
<dbReference type="SUPFAM" id="SSF51735">
    <property type="entry name" value="NAD(P)-binding Rossmann-fold domains"/>
    <property type="match status" value="1"/>
</dbReference>
<accession>O05389</accession>
<name>YRBE_BACSU</name>
<comment type="similarity">
    <text evidence="1">Belongs to the Gfo/Idh/MocA family.</text>
</comment>
<organism>
    <name type="scientific">Bacillus subtilis (strain 168)</name>
    <dbReference type="NCBI Taxonomy" id="224308"/>
    <lineage>
        <taxon>Bacteria</taxon>
        <taxon>Bacillati</taxon>
        <taxon>Bacillota</taxon>
        <taxon>Bacilli</taxon>
        <taxon>Bacillales</taxon>
        <taxon>Bacillaceae</taxon>
        <taxon>Bacillus</taxon>
    </lineage>
</organism>
<feature type="chain" id="PRO_0000091784" description="Uncharacterized oxidoreductase YrbE">
    <location>
        <begin position="1"/>
        <end position="341"/>
    </location>
</feature>
<reference key="1">
    <citation type="submission" date="1997-12" db="EMBL/GenBank/DDBJ databases">
        <title>A 17.8 kb segment in the spoVB-nadC region of the Bacillus subtilis 168 chromosome: sequencing and ruv operon identification.</title>
        <authorList>
            <person name="Tosato V."/>
            <person name="Bolotin A."/>
            <person name="Bertani I."/>
            <person name="Valentino I."/>
            <person name="Bruschi C.V."/>
        </authorList>
    </citation>
    <scope>NUCLEOTIDE SEQUENCE [GENOMIC DNA]</scope>
    <source>
        <strain>168</strain>
    </source>
</reference>
<reference key="2">
    <citation type="journal article" date="1997" name="Nature">
        <title>The complete genome sequence of the Gram-positive bacterium Bacillus subtilis.</title>
        <authorList>
            <person name="Kunst F."/>
            <person name="Ogasawara N."/>
            <person name="Moszer I."/>
            <person name="Albertini A.M."/>
            <person name="Alloni G."/>
            <person name="Azevedo V."/>
            <person name="Bertero M.G."/>
            <person name="Bessieres P."/>
            <person name="Bolotin A."/>
            <person name="Borchert S."/>
            <person name="Borriss R."/>
            <person name="Boursier L."/>
            <person name="Brans A."/>
            <person name="Braun M."/>
            <person name="Brignell S.C."/>
            <person name="Bron S."/>
            <person name="Brouillet S."/>
            <person name="Bruschi C.V."/>
            <person name="Caldwell B."/>
            <person name="Capuano V."/>
            <person name="Carter N.M."/>
            <person name="Choi S.-K."/>
            <person name="Codani J.-J."/>
            <person name="Connerton I.F."/>
            <person name="Cummings N.J."/>
            <person name="Daniel R.A."/>
            <person name="Denizot F."/>
            <person name="Devine K.M."/>
            <person name="Duesterhoeft A."/>
            <person name="Ehrlich S.D."/>
            <person name="Emmerson P.T."/>
            <person name="Entian K.-D."/>
            <person name="Errington J."/>
            <person name="Fabret C."/>
            <person name="Ferrari E."/>
            <person name="Foulger D."/>
            <person name="Fritz C."/>
            <person name="Fujita M."/>
            <person name="Fujita Y."/>
            <person name="Fuma S."/>
            <person name="Galizzi A."/>
            <person name="Galleron N."/>
            <person name="Ghim S.-Y."/>
            <person name="Glaser P."/>
            <person name="Goffeau A."/>
            <person name="Golightly E.J."/>
            <person name="Grandi G."/>
            <person name="Guiseppi G."/>
            <person name="Guy B.J."/>
            <person name="Haga K."/>
            <person name="Haiech J."/>
            <person name="Harwood C.R."/>
            <person name="Henaut A."/>
            <person name="Hilbert H."/>
            <person name="Holsappel S."/>
            <person name="Hosono S."/>
            <person name="Hullo M.-F."/>
            <person name="Itaya M."/>
            <person name="Jones L.-M."/>
            <person name="Joris B."/>
            <person name="Karamata D."/>
            <person name="Kasahara Y."/>
            <person name="Klaerr-Blanchard M."/>
            <person name="Klein C."/>
            <person name="Kobayashi Y."/>
            <person name="Koetter P."/>
            <person name="Koningstein G."/>
            <person name="Krogh S."/>
            <person name="Kumano M."/>
            <person name="Kurita K."/>
            <person name="Lapidus A."/>
            <person name="Lardinois S."/>
            <person name="Lauber J."/>
            <person name="Lazarevic V."/>
            <person name="Lee S.-M."/>
            <person name="Levine A."/>
            <person name="Liu H."/>
            <person name="Masuda S."/>
            <person name="Mauel C."/>
            <person name="Medigue C."/>
            <person name="Medina N."/>
            <person name="Mellado R.P."/>
            <person name="Mizuno M."/>
            <person name="Moestl D."/>
            <person name="Nakai S."/>
            <person name="Noback M."/>
            <person name="Noone D."/>
            <person name="O'Reilly M."/>
            <person name="Ogawa K."/>
            <person name="Ogiwara A."/>
            <person name="Oudega B."/>
            <person name="Park S.-H."/>
            <person name="Parro V."/>
            <person name="Pohl T.M."/>
            <person name="Portetelle D."/>
            <person name="Porwollik S."/>
            <person name="Prescott A.M."/>
            <person name="Presecan E."/>
            <person name="Pujic P."/>
            <person name="Purnelle B."/>
            <person name="Rapoport G."/>
            <person name="Rey M."/>
            <person name="Reynolds S."/>
            <person name="Rieger M."/>
            <person name="Rivolta C."/>
            <person name="Rocha E."/>
            <person name="Roche B."/>
            <person name="Rose M."/>
            <person name="Sadaie Y."/>
            <person name="Sato T."/>
            <person name="Scanlan E."/>
            <person name="Schleich S."/>
            <person name="Schroeter R."/>
            <person name="Scoffone F."/>
            <person name="Sekiguchi J."/>
            <person name="Sekowska A."/>
            <person name="Seror S.J."/>
            <person name="Serror P."/>
            <person name="Shin B.-S."/>
            <person name="Soldo B."/>
            <person name="Sorokin A."/>
            <person name="Tacconi E."/>
            <person name="Takagi T."/>
            <person name="Takahashi H."/>
            <person name="Takemaru K."/>
            <person name="Takeuchi M."/>
            <person name="Tamakoshi A."/>
            <person name="Tanaka T."/>
            <person name="Terpstra P."/>
            <person name="Tognoni A."/>
            <person name="Tosato V."/>
            <person name="Uchiyama S."/>
            <person name="Vandenbol M."/>
            <person name="Vannier F."/>
            <person name="Vassarotti A."/>
            <person name="Viari A."/>
            <person name="Wambutt R."/>
            <person name="Wedler E."/>
            <person name="Wedler H."/>
            <person name="Weitzenegger T."/>
            <person name="Winters P."/>
            <person name="Wipat A."/>
            <person name="Yamamoto H."/>
            <person name="Yamane K."/>
            <person name="Yasumoto K."/>
            <person name="Yata K."/>
            <person name="Yoshida K."/>
            <person name="Yoshikawa H.-F."/>
            <person name="Zumstein E."/>
            <person name="Yoshikawa H."/>
            <person name="Danchin A."/>
        </authorList>
    </citation>
    <scope>NUCLEOTIDE SEQUENCE [LARGE SCALE GENOMIC DNA]</scope>
    <source>
        <strain>168</strain>
    </source>
</reference>
<reference key="3">
    <citation type="journal article" date="1997" name="Microbiology">
        <title>BofC encodes a putative forespore regulator of the Bacillus subtilis sigma K checkpoint.</title>
        <authorList>
            <person name="Gomez M."/>
            <person name="Cutting S.M."/>
        </authorList>
    </citation>
    <scope>NUCLEOTIDE SEQUENCE [GENOMIC DNA] OF 252-341</scope>
    <source>
        <strain>168 / PY79</strain>
    </source>
</reference>
<sequence>MTKQIVTGIIGAGRIGKLHVQNISRIPHMKIKAISDIQASRIKSWADSHQIEYITSDYRDLLHDPDIDAIFICSPTAVHAQMIKEAAEAKKHIFCEKPVSFSLDETSEALAAVRKHGVTLQVGFNRRFDPHFKKIKTIVENGEIGTPHLLKITSRDPEPPNIDYVRTSGGLFMDMSIHDFDMARYIMGSEVTEVYAKGAALVNPSFAELGDIDTAVITLTFENGAMAVIDNSRQAVYGYDQRVEVFGTKGSAAADNSRPTTVEVSTADFVMKDKPHFFFLERYKDSYEEEILRFAEAIGTNQETPCTGNDGLQAGRIARAAQQSLAFGMPVSIEHTEKIAF</sequence>
<keyword id="KW-0560">Oxidoreductase</keyword>
<keyword id="KW-1185">Reference proteome</keyword>
<gene>
    <name type="primary">yrbE</name>
    <name type="ordered locus">BSU27770</name>
</gene>
<proteinExistence type="inferred from homology"/>